<protein>
    <recommendedName>
        <fullName>Probable electron transfer flavoprotein subunit alpha, mitochondrial</fullName>
        <shortName>Alpha-ETF</shortName>
    </recommendedName>
</protein>
<gene>
    <name type="primary">ETF1</name>
    <name type="ordered locus">CGB_I1080C</name>
</gene>
<name>ETFA_CRYGW</name>
<accession>Q5Y223</accession>
<accession>E6RBT6</accession>
<reference key="1">
    <citation type="journal article" date="2004" name="PLoS Biol.">
        <title>Convergent evolution of chromosomal sex-determining regions in the animal and fungal kingdoms.</title>
        <authorList>
            <person name="Fraser J.A."/>
            <person name="Diezmann S."/>
            <person name="Subaran R.L."/>
            <person name="Allen A."/>
            <person name="Lengeler K.B."/>
            <person name="Dietrich F.S."/>
            <person name="Heitman J."/>
        </authorList>
    </citation>
    <scope>NUCLEOTIDE SEQUENCE [GENOMIC DNA]</scope>
    <source>
        <strain>WM276 / ATCC MYA-4071</strain>
    </source>
</reference>
<reference key="2">
    <citation type="journal article" date="2011" name="MBio">
        <title>Genome variation in Cryptococcus gattii, an emerging pathogen of immunocompetent hosts.</title>
        <authorList>
            <person name="D'Souza C.A."/>
            <person name="Kronstad J.W."/>
            <person name="Taylor G."/>
            <person name="Warren R."/>
            <person name="Yuen M."/>
            <person name="Hu G."/>
            <person name="Jung W.H."/>
            <person name="Sham A."/>
            <person name="Kidd S.E."/>
            <person name="Tangen K."/>
            <person name="Lee N."/>
            <person name="Zeilmaker T."/>
            <person name="Sawkins J."/>
            <person name="McVicker G."/>
            <person name="Shah S."/>
            <person name="Gnerre S."/>
            <person name="Griggs A."/>
            <person name="Zeng Q."/>
            <person name="Bartlett K."/>
            <person name="Li W."/>
            <person name="Wang X."/>
            <person name="Heitman J."/>
            <person name="Stajich J.E."/>
            <person name="Fraser J.A."/>
            <person name="Meyer W."/>
            <person name="Carter D."/>
            <person name="Schein J."/>
            <person name="Krzywinski M."/>
            <person name="Kwon-Chung K.J."/>
            <person name="Varma A."/>
            <person name="Wang J."/>
            <person name="Brunham R."/>
            <person name="Fyfe M."/>
            <person name="Ouellette B.F.F."/>
            <person name="Siddiqui A."/>
            <person name="Marra M."/>
            <person name="Jones S."/>
            <person name="Holt R."/>
            <person name="Birren B.W."/>
            <person name="Galagan J.E."/>
            <person name="Cuomo C.A."/>
        </authorList>
    </citation>
    <scope>NUCLEOTIDE SEQUENCE [LARGE SCALE GENOMIC DNA]</scope>
    <source>
        <strain>WM276 / ATCC MYA-4071</strain>
    </source>
</reference>
<sequence length="346" mass="36060">MLYRSALRTSRAFTPRLALSHSRLVSSLVFLEHKAGKLSEASLSAVTAAKTLGNDTHGLLVGTKSEIENALDRAKEIKGLSKIYLARSDSYSHSLAEALASLLASIVSAKDVSHLFAAHTAVGKNVFPRLAGLLDSSLIADIIALESSGDTFTRPIYAGNAVLTIKSSPKDSVKIVTVRSTAFDKAPVAAGSAVIEDVDIITVDTPTQFVSEELTVSSRPDLASAARVVSGGRALKSKESFDAILNPLADSLGAAVGASRAAVDAGYADNSLQVGQTGKVVAPELYVAIGISGAIQHLAGMKESKMIIAINKDPDAPIFQVADVGLVADLFESVPQLVKELGNVKV</sequence>
<evidence type="ECO:0000250" key="1"/>
<evidence type="ECO:0000255" key="2"/>
<evidence type="ECO:0000305" key="3"/>
<keyword id="KW-0249">Electron transport</keyword>
<keyword id="KW-0274">FAD</keyword>
<keyword id="KW-0285">Flavoprotein</keyword>
<keyword id="KW-0496">Mitochondrion</keyword>
<keyword id="KW-0809">Transit peptide</keyword>
<keyword id="KW-0813">Transport</keyword>
<comment type="function">
    <text evidence="1">The electron transfer flavoprotein serves as a specific electron acceptor for several dehydrogenases, including five acyl-CoA dehydrogenases, glutaryl-CoA and sarcosine dehydrogenase. It transfers the electrons to the main mitochondrial respiratory chain via ETF-ubiquinone oxidoreductase (ETF dehydrogenase) (By similarity).</text>
</comment>
<comment type="cofactor">
    <cofactor evidence="1">
        <name>FAD</name>
        <dbReference type="ChEBI" id="CHEBI:57692"/>
    </cofactor>
    <text evidence="1">Binds 1 FAD per dimer.</text>
</comment>
<comment type="subunit">
    <text evidence="1">Heterodimer of an alpha and a beta subunit.</text>
</comment>
<comment type="subcellular location">
    <subcellularLocation>
        <location evidence="1">Mitochondrion matrix</location>
    </subcellularLocation>
</comment>
<comment type="similarity">
    <text evidence="3">Belongs to the ETF alpha-subunit/FixB family.</text>
</comment>
<dbReference type="EMBL" id="AY710430">
    <property type="protein sequence ID" value="AAV28773.1"/>
    <property type="molecule type" value="Genomic_DNA"/>
</dbReference>
<dbReference type="EMBL" id="CP000294">
    <property type="protein sequence ID" value="ADV24319.1"/>
    <property type="molecule type" value="Genomic_DNA"/>
</dbReference>
<dbReference type="RefSeq" id="XP_003196106.1">
    <property type="nucleotide sequence ID" value="XM_003196058.1"/>
</dbReference>
<dbReference type="SMR" id="Q5Y223"/>
<dbReference type="GeneID" id="10186258"/>
<dbReference type="KEGG" id="cgi:CGB_I1080C"/>
<dbReference type="VEuPathDB" id="FungiDB:CGB_I1080C"/>
<dbReference type="eggNOG" id="KOG3954">
    <property type="taxonomic scope" value="Eukaryota"/>
</dbReference>
<dbReference type="HOGENOM" id="CLU_034178_0_1_1"/>
<dbReference type="OrthoDB" id="1715808at2759"/>
<dbReference type="Proteomes" id="UP000007805">
    <property type="component" value="Chromosome I"/>
</dbReference>
<dbReference type="GO" id="GO:0005759">
    <property type="term" value="C:mitochondrial matrix"/>
    <property type="evidence" value="ECO:0007669"/>
    <property type="project" value="UniProtKB-SubCell"/>
</dbReference>
<dbReference type="GO" id="GO:0009055">
    <property type="term" value="F:electron transfer activity"/>
    <property type="evidence" value="ECO:0007669"/>
    <property type="project" value="InterPro"/>
</dbReference>
<dbReference type="GO" id="GO:0050660">
    <property type="term" value="F:flavin adenine dinucleotide binding"/>
    <property type="evidence" value="ECO:0007669"/>
    <property type="project" value="InterPro"/>
</dbReference>
<dbReference type="GO" id="GO:0033539">
    <property type="term" value="P:fatty acid beta-oxidation using acyl-CoA dehydrogenase"/>
    <property type="evidence" value="ECO:0007669"/>
    <property type="project" value="TreeGrafter"/>
</dbReference>
<dbReference type="CDD" id="cd01715">
    <property type="entry name" value="ETF_alpha"/>
    <property type="match status" value="1"/>
</dbReference>
<dbReference type="FunFam" id="3.40.50.1220:FF:000001">
    <property type="entry name" value="Electron transfer flavoprotein, alpha subunit"/>
    <property type="match status" value="1"/>
</dbReference>
<dbReference type="FunFam" id="3.40.50.620:FF:000301">
    <property type="entry name" value="Probable electron transfer flavoprotein subunit alpha, mitochondrial"/>
    <property type="match status" value="1"/>
</dbReference>
<dbReference type="Gene3D" id="3.40.50.620">
    <property type="entry name" value="HUPs"/>
    <property type="match status" value="1"/>
</dbReference>
<dbReference type="Gene3D" id="3.40.50.1220">
    <property type="entry name" value="TPP-binding domain"/>
    <property type="match status" value="1"/>
</dbReference>
<dbReference type="InterPro" id="IPR029035">
    <property type="entry name" value="DHS-like_NAD/FAD-binding_dom"/>
</dbReference>
<dbReference type="InterPro" id="IPR014730">
    <property type="entry name" value="ETF_a/b_N"/>
</dbReference>
<dbReference type="InterPro" id="IPR001308">
    <property type="entry name" value="ETF_a/FixB"/>
</dbReference>
<dbReference type="InterPro" id="IPR033947">
    <property type="entry name" value="ETF_alpha_N"/>
</dbReference>
<dbReference type="InterPro" id="IPR014731">
    <property type="entry name" value="ETF_asu_C"/>
</dbReference>
<dbReference type="InterPro" id="IPR018206">
    <property type="entry name" value="ETF_asu_C_CS"/>
</dbReference>
<dbReference type="InterPro" id="IPR014729">
    <property type="entry name" value="Rossmann-like_a/b/a_fold"/>
</dbReference>
<dbReference type="PANTHER" id="PTHR43153">
    <property type="entry name" value="ELECTRON TRANSFER FLAVOPROTEIN ALPHA"/>
    <property type="match status" value="1"/>
</dbReference>
<dbReference type="PANTHER" id="PTHR43153:SF1">
    <property type="entry name" value="ELECTRON TRANSFER FLAVOPROTEIN SUBUNIT ALPHA, MITOCHONDRIAL"/>
    <property type="match status" value="1"/>
</dbReference>
<dbReference type="Pfam" id="PF01012">
    <property type="entry name" value="ETF"/>
    <property type="match status" value="1"/>
</dbReference>
<dbReference type="Pfam" id="PF00766">
    <property type="entry name" value="ETF_alpha"/>
    <property type="match status" value="1"/>
</dbReference>
<dbReference type="PIRSF" id="PIRSF000089">
    <property type="entry name" value="Electra_flavoP_a"/>
    <property type="match status" value="1"/>
</dbReference>
<dbReference type="SMART" id="SM00893">
    <property type="entry name" value="ETF"/>
    <property type="match status" value="1"/>
</dbReference>
<dbReference type="SUPFAM" id="SSF52402">
    <property type="entry name" value="Adenine nucleotide alpha hydrolases-like"/>
    <property type="match status" value="1"/>
</dbReference>
<dbReference type="SUPFAM" id="SSF52467">
    <property type="entry name" value="DHS-like NAD/FAD-binding domain"/>
    <property type="match status" value="1"/>
</dbReference>
<dbReference type="PROSITE" id="PS00696">
    <property type="entry name" value="ETF_ALPHA"/>
    <property type="match status" value="1"/>
</dbReference>
<organism>
    <name type="scientific">Cryptococcus gattii serotype B (strain WM276 / ATCC MYA-4071)</name>
    <name type="common">Filobasidiella gattii</name>
    <name type="synonym">Cryptococcus bacillisporus</name>
    <dbReference type="NCBI Taxonomy" id="367775"/>
    <lineage>
        <taxon>Eukaryota</taxon>
        <taxon>Fungi</taxon>
        <taxon>Dikarya</taxon>
        <taxon>Basidiomycota</taxon>
        <taxon>Agaricomycotina</taxon>
        <taxon>Tremellomycetes</taxon>
        <taxon>Tremellales</taxon>
        <taxon>Cryptococcaceae</taxon>
        <taxon>Cryptococcus</taxon>
        <taxon>Cryptococcus gattii species complex</taxon>
    </lineage>
</organism>
<feature type="transit peptide" description="Mitochondrion" evidence="2">
    <location>
        <begin position="1"/>
        <end status="unknown"/>
    </location>
</feature>
<feature type="chain" id="PRO_0000008656" description="Probable electron transfer flavoprotein subunit alpha, mitochondrial">
    <location>
        <begin status="unknown"/>
        <end position="346"/>
    </location>
</feature>
<feature type="binding site" evidence="2">
    <location>
        <begin position="285"/>
        <end position="313"/>
    </location>
    <ligand>
        <name>FAD</name>
        <dbReference type="ChEBI" id="CHEBI:57692"/>
    </ligand>
</feature>
<proteinExistence type="inferred from homology"/>